<reference key="1">
    <citation type="journal article" date="2006" name="Proc. Natl. Acad. Sci. U.S.A.">
        <title>Comparative genomics of the lactic acid bacteria.</title>
        <authorList>
            <person name="Makarova K.S."/>
            <person name="Slesarev A."/>
            <person name="Wolf Y.I."/>
            <person name="Sorokin A."/>
            <person name="Mirkin B."/>
            <person name="Koonin E.V."/>
            <person name="Pavlov A."/>
            <person name="Pavlova N."/>
            <person name="Karamychev V."/>
            <person name="Polouchine N."/>
            <person name="Shakhova V."/>
            <person name="Grigoriev I."/>
            <person name="Lou Y."/>
            <person name="Rohksar D."/>
            <person name="Lucas S."/>
            <person name="Huang K."/>
            <person name="Goodstein D.M."/>
            <person name="Hawkins T."/>
            <person name="Plengvidhya V."/>
            <person name="Welker D."/>
            <person name="Hughes J."/>
            <person name="Goh Y."/>
            <person name="Benson A."/>
            <person name="Baldwin K."/>
            <person name="Lee J.-H."/>
            <person name="Diaz-Muniz I."/>
            <person name="Dosti B."/>
            <person name="Smeianov V."/>
            <person name="Wechter W."/>
            <person name="Barabote R."/>
            <person name="Lorca G."/>
            <person name="Altermann E."/>
            <person name="Barrangou R."/>
            <person name="Ganesan B."/>
            <person name="Xie Y."/>
            <person name="Rawsthorne H."/>
            <person name="Tamir D."/>
            <person name="Parker C."/>
            <person name="Breidt F."/>
            <person name="Broadbent J.R."/>
            <person name="Hutkins R."/>
            <person name="O'Sullivan D."/>
            <person name="Steele J."/>
            <person name="Unlu G."/>
            <person name="Saier M.H. Jr."/>
            <person name="Klaenhammer T."/>
            <person name="Richardson P."/>
            <person name="Kozyavkin S."/>
            <person name="Weimer B.C."/>
            <person name="Mills D.A."/>
        </authorList>
    </citation>
    <scope>NUCLEOTIDE SEQUENCE [LARGE SCALE GENOMIC DNA]</scope>
    <source>
        <strain>SK11</strain>
    </source>
</reference>
<gene>
    <name evidence="1" type="primary">dapA</name>
    <name type="ordered locus">LACR_1729</name>
</gene>
<feature type="chain" id="PRO_1000050202" description="4-hydroxy-tetrahydrodipicolinate synthase">
    <location>
        <begin position="1"/>
        <end position="297"/>
    </location>
</feature>
<feature type="active site" description="Proton donor/acceptor" evidence="1">
    <location>
        <position position="144"/>
    </location>
</feature>
<feature type="active site" description="Schiff-base intermediate with substrate" evidence="1">
    <location>
        <position position="172"/>
    </location>
</feature>
<feature type="binding site" evidence="1">
    <location>
        <position position="55"/>
    </location>
    <ligand>
        <name>pyruvate</name>
        <dbReference type="ChEBI" id="CHEBI:15361"/>
    </ligand>
</feature>
<feature type="binding site" evidence="1">
    <location>
        <position position="213"/>
    </location>
    <ligand>
        <name>pyruvate</name>
        <dbReference type="ChEBI" id="CHEBI:15361"/>
    </ligand>
</feature>
<feature type="site" description="Part of a proton relay during catalysis" evidence="1">
    <location>
        <position position="54"/>
    </location>
</feature>
<feature type="site" description="Part of a proton relay during catalysis" evidence="1">
    <location>
        <position position="118"/>
    </location>
</feature>
<proteinExistence type="inferred from homology"/>
<sequence length="297" mass="32228">MSAKETIEKLKKARIITALVTPFKENGQINFEAFPKLVEDLLASHTEGLILAGTTAESPTLTHDEELEIFASINQLVDGRVPLIAGIGTNDTRDSVEFIKEVAKLGYIDAGLAVTPYYNKPSQEGIYQHFKAIASASDLPIILYNIPGRVVTEILPDTILRLAQLENVIAVKECTSTDNLAYLIENVPEGFLVYTGEDGLAFHAKTLGGQGVISVASHILGQEFFEMFAEIDHGSIQEAAAIQRKILPKINALFSVTSPAPIKTVLNNKGYAVGGLRLPLVACTDQEAKIIIEQIEN</sequence>
<name>DAPA_LACLS</name>
<organism>
    <name type="scientific">Lactococcus lactis subsp. cremoris (strain SK11)</name>
    <dbReference type="NCBI Taxonomy" id="272622"/>
    <lineage>
        <taxon>Bacteria</taxon>
        <taxon>Bacillati</taxon>
        <taxon>Bacillota</taxon>
        <taxon>Bacilli</taxon>
        <taxon>Lactobacillales</taxon>
        <taxon>Streptococcaceae</taxon>
        <taxon>Lactococcus</taxon>
        <taxon>Lactococcus cremoris subsp. cremoris</taxon>
    </lineage>
</organism>
<protein>
    <recommendedName>
        <fullName evidence="1">4-hydroxy-tetrahydrodipicolinate synthase</fullName>
        <shortName evidence="1">HTPA synthase</shortName>
        <ecNumber evidence="1">4.3.3.7</ecNumber>
    </recommendedName>
</protein>
<comment type="function">
    <text evidence="1">Catalyzes the condensation of (S)-aspartate-beta-semialdehyde [(S)-ASA] and pyruvate to 4-hydroxy-tetrahydrodipicolinate (HTPA).</text>
</comment>
<comment type="catalytic activity">
    <reaction evidence="1">
        <text>L-aspartate 4-semialdehyde + pyruvate = (2S,4S)-4-hydroxy-2,3,4,5-tetrahydrodipicolinate + H2O + H(+)</text>
        <dbReference type="Rhea" id="RHEA:34171"/>
        <dbReference type="ChEBI" id="CHEBI:15361"/>
        <dbReference type="ChEBI" id="CHEBI:15377"/>
        <dbReference type="ChEBI" id="CHEBI:15378"/>
        <dbReference type="ChEBI" id="CHEBI:67139"/>
        <dbReference type="ChEBI" id="CHEBI:537519"/>
        <dbReference type="EC" id="4.3.3.7"/>
    </reaction>
</comment>
<comment type="pathway">
    <text evidence="1">Amino-acid biosynthesis; L-lysine biosynthesis via DAP pathway; (S)-tetrahydrodipicolinate from L-aspartate: step 3/4.</text>
</comment>
<comment type="subunit">
    <text evidence="1">Homotetramer; dimer of dimers.</text>
</comment>
<comment type="subcellular location">
    <subcellularLocation>
        <location evidence="1">Cytoplasm</location>
    </subcellularLocation>
</comment>
<comment type="similarity">
    <text evidence="1">Belongs to the DapA family.</text>
</comment>
<comment type="caution">
    <text evidence="2">Was originally thought to be a dihydrodipicolinate synthase (DHDPS), catalyzing the condensation of (S)-aspartate-beta-semialdehyde [(S)-ASA] and pyruvate to dihydrodipicolinate (DHDP). However, it was shown in E.coli that the product of the enzymatic reaction is not dihydrodipicolinate but in fact (4S)-4-hydroxy-2,3,4,5-tetrahydro-(2S)-dipicolinic acid (HTPA), and that the consecutive dehydration reaction leading to DHDP is not spontaneous but catalyzed by DapB.</text>
</comment>
<accession>Q02XU7</accession>
<evidence type="ECO:0000255" key="1">
    <source>
        <dbReference type="HAMAP-Rule" id="MF_00418"/>
    </source>
</evidence>
<evidence type="ECO:0000305" key="2"/>
<keyword id="KW-0028">Amino-acid biosynthesis</keyword>
<keyword id="KW-0963">Cytoplasm</keyword>
<keyword id="KW-0220">Diaminopimelate biosynthesis</keyword>
<keyword id="KW-0456">Lyase</keyword>
<keyword id="KW-0457">Lysine biosynthesis</keyword>
<keyword id="KW-0704">Schiff base</keyword>
<dbReference type="EC" id="4.3.3.7" evidence="1"/>
<dbReference type="EMBL" id="CP000425">
    <property type="protein sequence ID" value="ABJ73225.1"/>
    <property type="molecule type" value="Genomic_DNA"/>
</dbReference>
<dbReference type="RefSeq" id="WP_011676659.1">
    <property type="nucleotide sequence ID" value="NC_008527.1"/>
</dbReference>
<dbReference type="SMR" id="Q02XU7"/>
<dbReference type="KEGG" id="llc:LACR_1729"/>
<dbReference type="HOGENOM" id="CLU_049343_7_1_9"/>
<dbReference type="UniPathway" id="UPA00034">
    <property type="reaction ID" value="UER00017"/>
</dbReference>
<dbReference type="Proteomes" id="UP000000240">
    <property type="component" value="Chromosome"/>
</dbReference>
<dbReference type="GO" id="GO:0005829">
    <property type="term" value="C:cytosol"/>
    <property type="evidence" value="ECO:0007669"/>
    <property type="project" value="TreeGrafter"/>
</dbReference>
<dbReference type="GO" id="GO:0008840">
    <property type="term" value="F:4-hydroxy-tetrahydrodipicolinate synthase activity"/>
    <property type="evidence" value="ECO:0007669"/>
    <property type="project" value="UniProtKB-UniRule"/>
</dbReference>
<dbReference type="GO" id="GO:0019877">
    <property type="term" value="P:diaminopimelate biosynthetic process"/>
    <property type="evidence" value="ECO:0007669"/>
    <property type="project" value="UniProtKB-UniRule"/>
</dbReference>
<dbReference type="GO" id="GO:0009089">
    <property type="term" value="P:lysine biosynthetic process via diaminopimelate"/>
    <property type="evidence" value="ECO:0007669"/>
    <property type="project" value="UniProtKB-UniRule"/>
</dbReference>
<dbReference type="CDD" id="cd00950">
    <property type="entry name" value="DHDPS"/>
    <property type="match status" value="1"/>
</dbReference>
<dbReference type="Gene3D" id="3.20.20.70">
    <property type="entry name" value="Aldolase class I"/>
    <property type="match status" value="1"/>
</dbReference>
<dbReference type="HAMAP" id="MF_00418">
    <property type="entry name" value="DapA"/>
    <property type="match status" value="1"/>
</dbReference>
<dbReference type="InterPro" id="IPR013785">
    <property type="entry name" value="Aldolase_TIM"/>
</dbReference>
<dbReference type="InterPro" id="IPR005263">
    <property type="entry name" value="DapA"/>
</dbReference>
<dbReference type="InterPro" id="IPR002220">
    <property type="entry name" value="DapA-like"/>
</dbReference>
<dbReference type="InterPro" id="IPR020625">
    <property type="entry name" value="Schiff_base-form_aldolases_AS"/>
</dbReference>
<dbReference type="NCBIfam" id="TIGR00674">
    <property type="entry name" value="dapA"/>
    <property type="match status" value="1"/>
</dbReference>
<dbReference type="PANTHER" id="PTHR12128:SF66">
    <property type="entry name" value="4-HYDROXY-2-OXOGLUTARATE ALDOLASE, MITOCHONDRIAL"/>
    <property type="match status" value="1"/>
</dbReference>
<dbReference type="PANTHER" id="PTHR12128">
    <property type="entry name" value="DIHYDRODIPICOLINATE SYNTHASE"/>
    <property type="match status" value="1"/>
</dbReference>
<dbReference type="Pfam" id="PF00701">
    <property type="entry name" value="DHDPS"/>
    <property type="match status" value="1"/>
</dbReference>
<dbReference type="PIRSF" id="PIRSF001365">
    <property type="entry name" value="DHDPS"/>
    <property type="match status" value="1"/>
</dbReference>
<dbReference type="PRINTS" id="PR00146">
    <property type="entry name" value="DHPICSNTHASE"/>
</dbReference>
<dbReference type="SMART" id="SM01130">
    <property type="entry name" value="DHDPS"/>
    <property type="match status" value="1"/>
</dbReference>
<dbReference type="SUPFAM" id="SSF51569">
    <property type="entry name" value="Aldolase"/>
    <property type="match status" value="1"/>
</dbReference>
<dbReference type="PROSITE" id="PS00666">
    <property type="entry name" value="DHDPS_2"/>
    <property type="match status" value="1"/>
</dbReference>